<dbReference type="EC" id="4.2.1.20" evidence="1"/>
<dbReference type="EMBL" id="CP000555">
    <property type="protein sequence ID" value="ABM95112.1"/>
    <property type="molecule type" value="Genomic_DNA"/>
</dbReference>
<dbReference type="RefSeq" id="WP_011829749.1">
    <property type="nucleotide sequence ID" value="NC_008825.1"/>
</dbReference>
<dbReference type="SMR" id="A2SHS3"/>
<dbReference type="STRING" id="420662.Mpe_A2156"/>
<dbReference type="KEGG" id="mpt:Mpe_A2156"/>
<dbReference type="eggNOG" id="COG0159">
    <property type="taxonomic scope" value="Bacteria"/>
</dbReference>
<dbReference type="HOGENOM" id="CLU_016734_0_0_4"/>
<dbReference type="UniPathway" id="UPA00035">
    <property type="reaction ID" value="UER00044"/>
</dbReference>
<dbReference type="Proteomes" id="UP000000366">
    <property type="component" value="Chromosome"/>
</dbReference>
<dbReference type="GO" id="GO:0005829">
    <property type="term" value="C:cytosol"/>
    <property type="evidence" value="ECO:0007669"/>
    <property type="project" value="TreeGrafter"/>
</dbReference>
<dbReference type="GO" id="GO:0004834">
    <property type="term" value="F:tryptophan synthase activity"/>
    <property type="evidence" value="ECO:0007669"/>
    <property type="project" value="UniProtKB-UniRule"/>
</dbReference>
<dbReference type="CDD" id="cd04724">
    <property type="entry name" value="Tryptophan_synthase_alpha"/>
    <property type="match status" value="1"/>
</dbReference>
<dbReference type="FunFam" id="3.20.20.70:FF:000037">
    <property type="entry name" value="Tryptophan synthase alpha chain"/>
    <property type="match status" value="1"/>
</dbReference>
<dbReference type="Gene3D" id="3.20.20.70">
    <property type="entry name" value="Aldolase class I"/>
    <property type="match status" value="1"/>
</dbReference>
<dbReference type="HAMAP" id="MF_00131">
    <property type="entry name" value="Trp_synth_alpha"/>
    <property type="match status" value="1"/>
</dbReference>
<dbReference type="InterPro" id="IPR013785">
    <property type="entry name" value="Aldolase_TIM"/>
</dbReference>
<dbReference type="InterPro" id="IPR011060">
    <property type="entry name" value="RibuloseP-bd_barrel"/>
</dbReference>
<dbReference type="InterPro" id="IPR018204">
    <property type="entry name" value="Trp_synthase_alpha_AS"/>
</dbReference>
<dbReference type="InterPro" id="IPR002028">
    <property type="entry name" value="Trp_synthase_suA"/>
</dbReference>
<dbReference type="NCBIfam" id="TIGR00262">
    <property type="entry name" value="trpA"/>
    <property type="match status" value="1"/>
</dbReference>
<dbReference type="PANTHER" id="PTHR43406:SF1">
    <property type="entry name" value="TRYPTOPHAN SYNTHASE ALPHA CHAIN, CHLOROPLASTIC"/>
    <property type="match status" value="1"/>
</dbReference>
<dbReference type="PANTHER" id="PTHR43406">
    <property type="entry name" value="TRYPTOPHAN SYNTHASE, ALPHA CHAIN"/>
    <property type="match status" value="1"/>
</dbReference>
<dbReference type="Pfam" id="PF00290">
    <property type="entry name" value="Trp_syntA"/>
    <property type="match status" value="1"/>
</dbReference>
<dbReference type="SUPFAM" id="SSF51366">
    <property type="entry name" value="Ribulose-phoshate binding barrel"/>
    <property type="match status" value="1"/>
</dbReference>
<dbReference type="PROSITE" id="PS00167">
    <property type="entry name" value="TRP_SYNTHASE_ALPHA"/>
    <property type="match status" value="1"/>
</dbReference>
<protein>
    <recommendedName>
        <fullName evidence="1">Tryptophan synthase alpha chain</fullName>
        <ecNumber evidence="1">4.2.1.20</ecNumber>
    </recommendedName>
</protein>
<reference key="1">
    <citation type="journal article" date="2007" name="J. Bacteriol.">
        <title>Whole-genome analysis of the methyl tert-butyl ether-degrading beta-proteobacterium Methylibium petroleiphilum PM1.</title>
        <authorList>
            <person name="Kane S.R."/>
            <person name="Chakicherla A.Y."/>
            <person name="Chain P.S.G."/>
            <person name="Schmidt R."/>
            <person name="Shin M.W."/>
            <person name="Legler T.C."/>
            <person name="Scow K.M."/>
            <person name="Larimer F.W."/>
            <person name="Lucas S.M."/>
            <person name="Richardson P.M."/>
            <person name="Hristova K.R."/>
        </authorList>
    </citation>
    <scope>NUCLEOTIDE SEQUENCE [LARGE SCALE GENOMIC DNA]</scope>
    <source>
        <strain>ATCC BAA-1232 / LMG 22953 / PM1</strain>
    </source>
</reference>
<evidence type="ECO:0000255" key="1">
    <source>
        <dbReference type="HAMAP-Rule" id="MF_00131"/>
    </source>
</evidence>
<feature type="chain" id="PRO_1000018230" description="Tryptophan synthase alpha chain">
    <location>
        <begin position="1"/>
        <end position="272"/>
    </location>
</feature>
<feature type="active site" description="Proton acceptor" evidence="1">
    <location>
        <position position="49"/>
    </location>
</feature>
<feature type="active site" description="Proton acceptor" evidence="1">
    <location>
        <position position="60"/>
    </location>
</feature>
<keyword id="KW-0028">Amino-acid biosynthesis</keyword>
<keyword id="KW-0057">Aromatic amino acid biosynthesis</keyword>
<keyword id="KW-0456">Lyase</keyword>
<keyword id="KW-1185">Reference proteome</keyword>
<keyword id="KW-0822">Tryptophan biosynthesis</keyword>
<accession>A2SHS3</accession>
<organism>
    <name type="scientific">Methylibium petroleiphilum (strain ATCC BAA-1232 / LMG 22953 / PM1)</name>
    <dbReference type="NCBI Taxonomy" id="420662"/>
    <lineage>
        <taxon>Bacteria</taxon>
        <taxon>Pseudomonadati</taxon>
        <taxon>Pseudomonadota</taxon>
        <taxon>Betaproteobacteria</taxon>
        <taxon>Burkholderiales</taxon>
        <taxon>Sphaerotilaceae</taxon>
        <taxon>Methylibium</taxon>
    </lineage>
</organism>
<sequence>MSRIAATFERLRGQRRTALIPYITAGDPYADATVDIMLAMAGAGADVIELGVPFSDPMADGPVIQKASERALAKGIGMGQVLAMVRSFREHNDTTPVVLMGYANPVERYGIDRFVADAKSAGVDGVLVVDYPPEECEAFAAQLQGADLDPIFLLAPTSTEQRMKDVGRIARGYVYYVSLKGVTGAGHLDTDAVATMLPRIREHVKVPVGVGFGIRDAATAKALAAVADAVVIGSRIVQLLEAEPRESVAAVGGTFIASIREALDSSTEGVRA</sequence>
<comment type="function">
    <text evidence="1">The alpha subunit is responsible for the aldol cleavage of indoleglycerol phosphate to indole and glyceraldehyde 3-phosphate.</text>
</comment>
<comment type="catalytic activity">
    <reaction evidence="1">
        <text>(1S,2R)-1-C-(indol-3-yl)glycerol 3-phosphate + L-serine = D-glyceraldehyde 3-phosphate + L-tryptophan + H2O</text>
        <dbReference type="Rhea" id="RHEA:10532"/>
        <dbReference type="ChEBI" id="CHEBI:15377"/>
        <dbReference type="ChEBI" id="CHEBI:33384"/>
        <dbReference type="ChEBI" id="CHEBI:57912"/>
        <dbReference type="ChEBI" id="CHEBI:58866"/>
        <dbReference type="ChEBI" id="CHEBI:59776"/>
        <dbReference type="EC" id="4.2.1.20"/>
    </reaction>
</comment>
<comment type="pathway">
    <text evidence="1">Amino-acid biosynthesis; L-tryptophan biosynthesis; L-tryptophan from chorismate: step 5/5.</text>
</comment>
<comment type="subunit">
    <text evidence="1">Tetramer of two alpha and two beta chains.</text>
</comment>
<comment type="similarity">
    <text evidence="1">Belongs to the TrpA family.</text>
</comment>
<name>TRPA_METPP</name>
<gene>
    <name evidence="1" type="primary">trpA</name>
    <name type="ordered locus">Mpe_A2156</name>
</gene>
<proteinExistence type="inferred from homology"/>